<name>PFKA3_BACTN</name>
<keyword id="KW-0067">ATP-binding</keyword>
<keyword id="KW-0963">Cytoplasm</keyword>
<keyword id="KW-0324">Glycolysis</keyword>
<keyword id="KW-0418">Kinase</keyword>
<keyword id="KW-0460">Magnesium</keyword>
<keyword id="KW-0479">Metal-binding</keyword>
<keyword id="KW-0547">Nucleotide-binding</keyword>
<keyword id="KW-1185">Reference proteome</keyword>
<keyword id="KW-0808">Transferase</keyword>
<dbReference type="EC" id="2.7.1.11" evidence="1"/>
<dbReference type="EMBL" id="AE015928">
    <property type="protein sequence ID" value="AAO78462.1"/>
    <property type="molecule type" value="Genomic_DNA"/>
</dbReference>
<dbReference type="RefSeq" id="NP_812268.1">
    <property type="nucleotide sequence ID" value="NC_004663.1"/>
</dbReference>
<dbReference type="RefSeq" id="WP_008767561.1">
    <property type="nucleotide sequence ID" value="NC_004663.1"/>
</dbReference>
<dbReference type="SMR" id="Q8A2E9"/>
<dbReference type="STRING" id="226186.BT_3356"/>
<dbReference type="PaxDb" id="226186-BT_3356"/>
<dbReference type="EnsemblBacteria" id="AAO78462">
    <property type="protein sequence ID" value="AAO78462"/>
    <property type="gene ID" value="BT_3356"/>
</dbReference>
<dbReference type="KEGG" id="bth:BT_3356"/>
<dbReference type="PATRIC" id="fig|226186.12.peg.3424"/>
<dbReference type="eggNOG" id="COG0205">
    <property type="taxonomic scope" value="Bacteria"/>
</dbReference>
<dbReference type="HOGENOM" id="CLU_020655_0_0_10"/>
<dbReference type="InParanoid" id="Q8A2E9"/>
<dbReference type="OrthoDB" id="9802503at2"/>
<dbReference type="UniPathway" id="UPA00109">
    <property type="reaction ID" value="UER00182"/>
</dbReference>
<dbReference type="Proteomes" id="UP000001414">
    <property type="component" value="Chromosome"/>
</dbReference>
<dbReference type="GO" id="GO:0005945">
    <property type="term" value="C:6-phosphofructokinase complex"/>
    <property type="evidence" value="ECO:0000318"/>
    <property type="project" value="GO_Central"/>
</dbReference>
<dbReference type="GO" id="GO:0003872">
    <property type="term" value="F:6-phosphofructokinase activity"/>
    <property type="evidence" value="ECO:0000318"/>
    <property type="project" value="GO_Central"/>
</dbReference>
<dbReference type="GO" id="GO:0005524">
    <property type="term" value="F:ATP binding"/>
    <property type="evidence" value="ECO:0007669"/>
    <property type="project" value="UniProtKB-KW"/>
</dbReference>
<dbReference type="GO" id="GO:0047334">
    <property type="term" value="F:diphosphate-fructose-6-phosphate 1-phosphotransferase activity"/>
    <property type="evidence" value="ECO:0007669"/>
    <property type="project" value="InterPro"/>
</dbReference>
<dbReference type="GO" id="GO:0070095">
    <property type="term" value="F:fructose-6-phosphate binding"/>
    <property type="evidence" value="ECO:0000318"/>
    <property type="project" value="GO_Central"/>
</dbReference>
<dbReference type="GO" id="GO:0046872">
    <property type="term" value="F:metal ion binding"/>
    <property type="evidence" value="ECO:0007669"/>
    <property type="project" value="UniProtKB-KW"/>
</dbReference>
<dbReference type="GO" id="GO:0061621">
    <property type="term" value="P:canonical glycolysis"/>
    <property type="evidence" value="ECO:0000318"/>
    <property type="project" value="GO_Central"/>
</dbReference>
<dbReference type="GO" id="GO:0030388">
    <property type="term" value="P:fructose 1,6-bisphosphate metabolic process"/>
    <property type="evidence" value="ECO:0000318"/>
    <property type="project" value="GO_Central"/>
</dbReference>
<dbReference type="GO" id="GO:0006002">
    <property type="term" value="P:fructose 6-phosphate metabolic process"/>
    <property type="evidence" value="ECO:0000318"/>
    <property type="project" value="GO_Central"/>
</dbReference>
<dbReference type="FunFam" id="3.40.50.460:FF:000009">
    <property type="entry name" value="ATP-dependent 6-phosphofructokinase"/>
    <property type="match status" value="1"/>
</dbReference>
<dbReference type="Gene3D" id="3.40.50.450">
    <property type="match status" value="1"/>
</dbReference>
<dbReference type="Gene3D" id="3.40.50.460">
    <property type="entry name" value="Phosphofructokinase domain"/>
    <property type="match status" value="1"/>
</dbReference>
<dbReference type="HAMAP" id="MF_01976">
    <property type="entry name" value="Phosphofructokinase_III"/>
    <property type="match status" value="1"/>
</dbReference>
<dbReference type="InterPro" id="IPR022953">
    <property type="entry name" value="ATP_PFK"/>
</dbReference>
<dbReference type="InterPro" id="IPR012003">
    <property type="entry name" value="ATP_PFK_prok-type"/>
</dbReference>
<dbReference type="InterPro" id="IPR000023">
    <property type="entry name" value="Phosphofructokinase_dom"/>
</dbReference>
<dbReference type="InterPro" id="IPR012829">
    <property type="entry name" value="Phosphofructokinase_III"/>
</dbReference>
<dbReference type="InterPro" id="IPR035966">
    <property type="entry name" value="PKF_sf"/>
</dbReference>
<dbReference type="NCBIfam" id="NF002872">
    <property type="entry name" value="PRK03202.1"/>
    <property type="match status" value="1"/>
</dbReference>
<dbReference type="PANTHER" id="PTHR13697:SF52">
    <property type="entry name" value="ATP-DEPENDENT 6-PHOSPHOFRUCTOKINASE 3"/>
    <property type="match status" value="1"/>
</dbReference>
<dbReference type="PANTHER" id="PTHR13697">
    <property type="entry name" value="PHOSPHOFRUCTOKINASE"/>
    <property type="match status" value="1"/>
</dbReference>
<dbReference type="Pfam" id="PF00365">
    <property type="entry name" value="PFK"/>
    <property type="match status" value="1"/>
</dbReference>
<dbReference type="PIRSF" id="PIRSF000532">
    <property type="entry name" value="ATP_PFK_prok"/>
    <property type="match status" value="1"/>
</dbReference>
<dbReference type="PRINTS" id="PR00476">
    <property type="entry name" value="PHFRCTKINASE"/>
</dbReference>
<dbReference type="SUPFAM" id="SSF53784">
    <property type="entry name" value="Phosphofructokinase"/>
    <property type="match status" value="1"/>
</dbReference>
<reference key="1">
    <citation type="journal article" date="2003" name="Science">
        <title>A genomic view of the human-Bacteroides thetaiotaomicron symbiosis.</title>
        <authorList>
            <person name="Xu J."/>
            <person name="Bjursell M.K."/>
            <person name="Himrod J."/>
            <person name="Deng S."/>
            <person name="Carmichael L.K."/>
            <person name="Chiang H.C."/>
            <person name="Hooper L.V."/>
            <person name="Gordon J.I."/>
        </authorList>
    </citation>
    <scope>NUCLEOTIDE SEQUENCE [LARGE SCALE GENOMIC DNA]</scope>
    <source>
        <strain>ATCC 29148 / DSM 2079 / JCM 5827 / CCUG 10774 / NCTC 10582 / VPI-5482 / E50</strain>
    </source>
</reference>
<feature type="chain" id="PRO_0000111939" description="ATP-dependent 6-phosphofructokinase 3">
    <location>
        <begin position="1"/>
        <end position="336"/>
    </location>
</feature>
<feature type="active site" description="Proton acceptor" evidence="1">
    <location>
        <position position="133"/>
    </location>
</feature>
<feature type="binding site" evidence="1">
    <location>
        <position position="10"/>
    </location>
    <ligand>
        <name>ATP</name>
        <dbReference type="ChEBI" id="CHEBI:30616"/>
    </ligand>
</feature>
<feature type="binding site" evidence="1">
    <location>
        <begin position="72"/>
        <end position="73"/>
    </location>
    <ligand>
        <name>ATP</name>
        <dbReference type="ChEBI" id="CHEBI:30616"/>
    </ligand>
</feature>
<feature type="binding site" evidence="1">
    <location>
        <begin position="108"/>
        <end position="111"/>
    </location>
    <ligand>
        <name>ATP</name>
        <dbReference type="ChEBI" id="CHEBI:30616"/>
    </ligand>
</feature>
<feature type="binding site" evidence="1">
    <location>
        <position position="109"/>
    </location>
    <ligand>
        <name>Mg(2+)</name>
        <dbReference type="ChEBI" id="CHEBI:18420"/>
        <note>catalytic</note>
    </ligand>
</feature>
<feature type="binding site" description="in other chain" evidence="1">
    <location>
        <begin position="131"/>
        <end position="133"/>
    </location>
    <ligand>
        <name>substrate</name>
        <note>ligand shared between dimeric partners</note>
    </ligand>
</feature>
<feature type="binding site" evidence="1">
    <location>
        <position position="168"/>
    </location>
    <ligand>
        <name>substrate</name>
        <note>ligand shared between dimeric partners</note>
    </ligand>
</feature>
<feature type="binding site" description="in other chain" evidence="1">
    <location>
        <begin position="175"/>
        <end position="177"/>
    </location>
    <ligand>
        <name>substrate</name>
        <note>ligand shared between dimeric partners</note>
    </ligand>
</feature>
<feature type="binding site" description="in other chain" evidence="1">
    <location>
        <position position="228"/>
    </location>
    <ligand>
        <name>substrate</name>
        <note>ligand shared between dimeric partners</note>
    </ligand>
</feature>
<feature type="binding site" evidence="1">
    <location>
        <position position="255"/>
    </location>
    <ligand>
        <name>substrate</name>
        <note>ligand shared between dimeric partners</note>
    </ligand>
</feature>
<feature type="binding site" description="in other chain" evidence="1">
    <location>
        <begin position="261"/>
        <end position="264"/>
    </location>
    <ligand>
        <name>substrate</name>
        <note>ligand shared between dimeric partners</note>
    </ligand>
</feature>
<feature type="site" description="Important for substrate specificity; cannot use PPi as phosphoryl donor" evidence="1">
    <location>
        <position position="110"/>
    </location>
</feature>
<proteinExistence type="inferred from homology"/>
<comment type="function">
    <text evidence="1">Catalyzes the phosphorylation of D-fructose 6-phosphate to fructose 1,6-bisphosphate by ATP, the first committing step of glycolysis.</text>
</comment>
<comment type="catalytic activity">
    <reaction evidence="1">
        <text>beta-D-fructose 6-phosphate + ATP = beta-D-fructose 1,6-bisphosphate + ADP + H(+)</text>
        <dbReference type="Rhea" id="RHEA:16109"/>
        <dbReference type="ChEBI" id="CHEBI:15378"/>
        <dbReference type="ChEBI" id="CHEBI:30616"/>
        <dbReference type="ChEBI" id="CHEBI:32966"/>
        <dbReference type="ChEBI" id="CHEBI:57634"/>
        <dbReference type="ChEBI" id="CHEBI:456216"/>
        <dbReference type="EC" id="2.7.1.11"/>
    </reaction>
</comment>
<comment type="cofactor">
    <cofactor evidence="1">
        <name>Mg(2+)</name>
        <dbReference type="ChEBI" id="CHEBI:18420"/>
    </cofactor>
</comment>
<comment type="pathway">
    <text evidence="1">Carbohydrate degradation; glycolysis; D-glyceraldehyde 3-phosphate and glycerone phosphate from D-glucose: step 3/4.</text>
</comment>
<comment type="subunit">
    <text evidence="1">Homodimer or homotetramer.</text>
</comment>
<comment type="subcellular location">
    <subcellularLocation>
        <location evidence="1">Cytoplasm</location>
    </subcellularLocation>
</comment>
<comment type="similarity">
    <text evidence="1">Belongs to the phosphofructokinase type A (PFKA) family. Mixed-substrate PFK group III subfamily.</text>
</comment>
<gene>
    <name evidence="1" type="primary">pfkA3</name>
    <name type="ordered locus">BT_3356</name>
</gene>
<organism>
    <name type="scientific">Bacteroides thetaiotaomicron (strain ATCC 29148 / DSM 2079 / JCM 5827 / CCUG 10774 / NCTC 10582 / VPI-5482 / E50)</name>
    <dbReference type="NCBI Taxonomy" id="226186"/>
    <lineage>
        <taxon>Bacteria</taxon>
        <taxon>Pseudomonadati</taxon>
        <taxon>Bacteroidota</taxon>
        <taxon>Bacteroidia</taxon>
        <taxon>Bacteroidales</taxon>
        <taxon>Bacteroidaceae</taxon>
        <taxon>Bacteroides</taxon>
    </lineage>
</organism>
<accession>Q8A2E9</accession>
<sequence>MRIGILTSGGDCPGINATIRGVCKTAINHYGMEVIGIHSGFQGLLTKDIESFTDKSLSGLLNQGGTMLGTSREKPFKKGGVVSDVDKPALILQNIQEMGLDCVVCIGGNGTQKTAAKFAAMGVNIVSVPKTIDNDIWGTDISFGFDSAVSIATDAIDRLHSTASSHKRVMVIEVMGHKAGWIALYSGMAGGGDVILVPEIPYNIKNIGNTILERLKKGKPYSIVVVAEGILTDGRKRAAEYIAQEIEYETGIETRETVLGYIQRGGSPTPFDRNLSTRMGGHATELIANGQFGRMIALKGDDISSIPLEEVAGKLKLVTEDHDLVIQGRRMGICFG</sequence>
<protein>
    <recommendedName>
        <fullName evidence="1">ATP-dependent 6-phosphofructokinase 3</fullName>
        <shortName evidence="1">ATP-PFK 3</shortName>
        <shortName evidence="1">Phosphofructokinase 3</shortName>
        <ecNumber evidence="1">2.7.1.11</ecNumber>
    </recommendedName>
    <alternativeName>
        <fullName evidence="1">Phosphohexokinase 3</fullName>
    </alternativeName>
</protein>
<evidence type="ECO:0000255" key="1">
    <source>
        <dbReference type="HAMAP-Rule" id="MF_01976"/>
    </source>
</evidence>